<feature type="chain" id="PRO_0000385064" description="Uncharacterized protein ORF34">
    <location>
        <begin position="1"/>
        <end position="124"/>
    </location>
</feature>
<keyword id="KW-1185">Reference proteome</keyword>
<dbReference type="EMBL" id="AY509253">
    <property type="protein sequence ID" value="AAS00925.1"/>
    <property type="molecule type" value="Genomic_DNA"/>
</dbReference>
<dbReference type="RefSeq" id="YP_024578.1">
    <property type="nucleotide sequence ID" value="NC_005881.2"/>
</dbReference>
<dbReference type="KEGG" id="vg:2948211"/>
<dbReference type="Proteomes" id="UP000007021">
    <property type="component" value="Segment"/>
</dbReference>
<gene>
    <name type="ORF">ORF34</name>
</gene>
<accession>Q6R7J0</accession>
<organismHost>
    <name type="scientific">Magallana gigas</name>
    <name type="common">Pacific oyster</name>
    <name type="synonym">Crassostrea gigas</name>
    <dbReference type="NCBI Taxonomy" id="29159"/>
</organismHost>
<organismHost>
    <name type="scientific">Pecten maximus</name>
    <name type="common">King scallop</name>
    <name type="synonym">Pilgrim's clam</name>
    <dbReference type="NCBI Taxonomy" id="6579"/>
</organismHost>
<name>Y034_OSHVF</name>
<protein>
    <recommendedName>
        <fullName>Uncharacterized protein ORF34</fullName>
    </recommendedName>
</protein>
<sequence length="124" mass="13935">MTTVIHMMNGINSVAPTFKVNYFTNEHDVFKIGFSNDVVFEVNTRTYEVGTPEEFRLNAGQAAITVAFWDAFVQGGDDEKFFTTIESRLKSSVAYATWQLGIDFLPDIAWSKISPVELNLATLQ</sequence>
<reference key="1">
    <citation type="journal article" date="2005" name="J. Gen. Virol.">
        <title>A novel class of herpesvirus with bivalve hosts.</title>
        <authorList>
            <person name="Davison A.J."/>
            <person name="Trus B.L."/>
            <person name="Cheng N."/>
            <person name="Steven A.C."/>
            <person name="Watson M.S."/>
            <person name="Cunningham C."/>
            <person name="Le Deuff R.M."/>
            <person name="Renault T."/>
        </authorList>
    </citation>
    <scope>NUCLEOTIDE SEQUENCE [LARGE SCALE GENOMIC DNA]</scope>
</reference>
<organism>
    <name type="scientific">Ostreid herpesvirus 1 (isolate France)</name>
    <name type="common">OsHV-1</name>
    <name type="synonym">Pacific oyster herpesvirus</name>
    <dbReference type="NCBI Taxonomy" id="654903"/>
    <lineage>
        <taxon>Viruses</taxon>
        <taxon>Duplodnaviria</taxon>
        <taxon>Heunggongvirae</taxon>
        <taxon>Peploviricota</taxon>
        <taxon>Herviviricetes</taxon>
        <taxon>Herpesvirales</taxon>
        <taxon>Malacoherpesviridae</taxon>
        <taxon>Ostreavirus</taxon>
        <taxon>Ostreavirus ostreidmalaco1</taxon>
        <taxon>Ostreid herpesvirus 1</taxon>
    </lineage>
</organism>
<proteinExistence type="predicted"/>